<name>ATPB_RICCN</name>
<reference key="1">
    <citation type="journal article" date="2001" name="Science">
        <title>Mechanisms of evolution in Rickettsia conorii and R. prowazekii.</title>
        <authorList>
            <person name="Ogata H."/>
            <person name="Audic S."/>
            <person name="Renesto-Audiffren P."/>
            <person name="Fournier P.-E."/>
            <person name="Barbe V."/>
            <person name="Samson D."/>
            <person name="Roux V."/>
            <person name="Cossart P."/>
            <person name="Weissenbach J."/>
            <person name="Claverie J.-M."/>
            <person name="Raoult D."/>
        </authorList>
    </citation>
    <scope>NUCLEOTIDE SEQUENCE [LARGE SCALE GENOMIC DNA]</scope>
    <source>
        <strain>ATCC VR-613 / Malish 7</strain>
    </source>
</reference>
<feature type="chain" id="PRO_0000144465" description="ATP synthase subunit beta">
    <location>
        <begin position="1"/>
        <end position="473"/>
    </location>
</feature>
<feature type="binding site" evidence="1">
    <location>
        <begin position="153"/>
        <end position="160"/>
    </location>
    <ligand>
        <name>ATP</name>
        <dbReference type="ChEBI" id="CHEBI:30616"/>
    </ligand>
</feature>
<proteinExistence type="inferred from homology"/>
<organism>
    <name type="scientific">Rickettsia conorii (strain ATCC VR-613 / Malish 7)</name>
    <dbReference type="NCBI Taxonomy" id="272944"/>
    <lineage>
        <taxon>Bacteria</taxon>
        <taxon>Pseudomonadati</taxon>
        <taxon>Pseudomonadota</taxon>
        <taxon>Alphaproteobacteria</taxon>
        <taxon>Rickettsiales</taxon>
        <taxon>Rickettsiaceae</taxon>
        <taxon>Rickettsieae</taxon>
        <taxon>Rickettsia</taxon>
        <taxon>spotted fever group</taxon>
    </lineage>
</organism>
<dbReference type="EC" id="7.1.2.2" evidence="1"/>
<dbReference type="EMBL" id="AE006914">
    <property type="protein sequence ID" value="AAL03773.1"/>
    <property type="status" value="ALT_INIT"/>
    <property type="molecule type" value="Genomic_DNA"/>
</dbReference>
<dbReference type="PIR" id="C97854">
    <property type="entry name" value="C97854"/>
</dbReference>
<dbReference type="RefSeq" id="WP_041471750.1">
    <property type="nucleotide sequence ID" value="NC_003103.1"/>
</dbReference>
<dbReference type="SMR" id="Q92G88"/>
<dbReference type="GeneID" id="928389"/>
<dbReference type="KEGG" id="rco:RC1235"/>
<dbReference type="PATRIC" id="fig|272944.4.peg.1416"/>
<dbReference type="HOGENOM" id="CLU_022398_0_2_5"/>
<dbReference type="Proteomes" id="UP000000816">
    <property type="component" value="Chromosome"/>
</dbReference>
<dbReference type="GO" id="GO:0005886">
    <property type="term" value="C:plasma membrane"/>
    <property type="evidence" value="ECO:0007669"/>
    <property type="project" value="UniProtKB-SubCell"/>
</dbReference>
<dbReference type="GO" id="GO:0045259">
    <property type="term" value="C:proton-transporting ATP synthase complex"/>
    <property type="evidence" value="ECO:0007669"/>
    <property type="project" value="UniProtKB-KW"/>
</dbReference>
<dbReference type="GO" id="GO:0005524">
    <property type="term" value="F:ATP binding"/>
    <property type="evidence" value="ECO:0007669"/>
    <property type="project" value="UniProtKB-UniRule"/>
</dbReference>
<dbReference type="GO" id="GO:0016887">
    <property type="term" value="F:ATP hydrolysis activity"/>
    <property type="evidence" value="ECO:0007669"/>
    <property type="project" value="InterPro"/>
</dbReference>
<dbReference type="GO" id="GO:0046933">
    <property type="term" value="F:proton-transporting ATP synthase activity, rotational mechanism"/>
    <property type="evidence" value="ECO:0007669"/>
    <property type="project" value="UniProtKB-UniRule"/>
</dbReference>
<dbReference type="CDD" id="cd18110">
    <property type="entry name" value="ATP-synt_F1_beta_C"/>
    <property type="match status" value="1"/>
</dbReference>
<dbReference type="CDD" id="cd18115">
    <property type="entry name" value="ATP-synt_F1_beta_N"/>
    <property type="match status" value="1"/>
</dbReference>
<dbReference type="CDD" id="cd01133">
    <property type="entry name" value="F1-ATPase_beta_CD"/>
    <property type="match status" value="1"/>
</dbReference>
<dbReference type="FunFam" id="1.10.1140.10:FF:000001">
    <property type="entry name" value="ATP synthase subunit beta"/>
    <property type="match status" value="1"/>
</dbReference>
<dbReference type="FunFam" id="2.40.10.170:FF:000014">
    <property type="entry name" value="ATP synthase subunit beta"/>
    <property type="match status" value="1"/>
</dbReference>
<dbReference type="FunFam" id="3.40.50.300:FF:000026">
    <property type="entry name" value="ATP synthase subunit beta"/>
    <property type="match status" value="1"/>
</dbReference>
<dbReference type="Gene3D" id="2.40.10.170">
    <property type="match status" value="1"/>
</dbReference>
<dbReference type="Gene3D" id="1.10.1140.10">
    <property type="entry name" value="Bovine Mitochondrial F1-atpase, Atp Synthase Beta Chain, Chain D, domain 3"/>
    <property type="match status" value="1"/>
</dbReference>
<dbReference type="Gene3D" id="3.40.50.300">
    <property type="entry name" value="P-loop containing nucleotide triphosphate hydrolases"/>
    <property type="match status" value="1"/>
</dbReference>
<dbReference type="HAMAP" id="MF_01347">
    <property type="entry name" value="ATP_synth_beta_bact"/>
    <property type="match status" value="1"/>
</dbReference>
<dbReference type="InterPro" id="IPR003593">
    <property type="entry name" value="AAA+_ATPase"/>
</dbReference>
<dbReference type="InterPro" id="IPR055190">
    <property type="entry name" value="ATP-synt_VA_C"/>
</dbReference>
<dbReference type="InterPro" id="IPR005722">
    <property type="entry name" value="ATP_synth_F1_bsu"/>
</dbReference>
<dbReference type="InterPro" id="IPR020003">
    <property type="entry name" value="ATPase_a/bsu_AS"/>
</dbReference>
<dbReference type="InterPro" id="IPR050053">
    <property type="entry name" value="ATPase_alpha/beta_chains"/>
</dbReference>
<dbReference type="InterPro" id="IPR004100">
    <property type="entry name" value="ATPase_F1/V1/A1_a/bsu_N"/>
</dbReference>
<dbReference type="InterPro" id="IPR036121">
    <property type="entry name" value="ATPase_F1/V1/A1_a/bsu_N_sf"/>
</dbReference>
<dbReference type="InterPro" id="IPR000194">
    <property type="entry name" value="ATPase_F1/V1/A1_a/bsu_nucl-bd"/>
</dbReference>
<dbReference type="InterPro" id="IPR024034">
    <property type="entry name" value="ATPase_F1/V1_b/a_C"/>
</dbReference>
<dbReference type="InterPro" id="IPR027417">
    <property type="entry name" value="P-loop_NTPase"/>
</dbReference>
<dbReference type="NCBIfam" id="TIGR01039">
    <property type="entry name" value="atpD"/>
    <property type="match status" value="1"/>
</dbReference>
<dbReference type="PANTHER" id="PTHR15184">
    <property type="entry name" value="ATP SYNTHASE"/>
    <property type="match status" value="1"/>
</dbReference>
<dbReference type="PANTHER" id="PTHR15184:SF71">
    <property type="entry name" value="ATP SYNTHASE SUBUNIT BETA, MITOCHONDRIAL"/>
    <property type="match status" value="1"/>
</dbReference>
<dbReference type="Pfam" id="PF00006">
    <property type="entry name" value="ATP-synt_ab"/>
    <property type="match status" value="1"/>
</dbReference>
<dbReference type="Pfam" id="PF02874">
    <property type="entry name" value="ATP-synt_ab_N"/>
    <property type="match status" value="1"/>
</dbReference>
<dbReference type="Pfam" id="PF22919">
    <property type="entry name" value="ATP-synt_VA_C"/>
    <property type="match status" value="1"/>
</dbReference>
<dbReference type="PIRSF" id="PIRSF039072">
    <property type="entry name" value="ATPase_subunit_beta"/>
    <property type="match status" value="1"/>
</dbReference>
<dbReference type="SMART" id="SM00382">
    <property type="entry name" value="AAA"/>
    <property type="match status" value="1"/>
</dbReference>
<dbReference type="SUPFAM" id="SSF47917">
    <property type="entry name" value="C-terminal domain of alpha and beta subunits of F1 ATP synthase"/>
    <property type="match status" value="1"/>
</dbReference>
<dbReference type="SUPFAM" id="SSF50615">
    <property type="entry name" value="N-terminal domain of alpha and beta subunits of F1 ATP synthase"/>
    <property type="match status" value="1"/>
</dbReference>
<dbReference type="SUPFAM" id="SSF52540">
    <property type="entry name" value="P-loop containing nucleoside triphosphate hydrolases"/>
    <property type="match status" value="1"/>
</dbReference>
<dbReference type="PROSITE" id="PS00152">
    <property type="entry name" value="ATPASE_ALPHA_BETA"/>
    <property type="match status" value="1"/>
</dbReference>
<gene>
    <name evidence="1" type="primary">atpD</name>
    <name type="ordered locus">RC1235</name>
</gene>
<keyword id="KW-0066">ATP synthesis</keyword>
<keyword id="KW-0067">ATP-binding</keyword>
<keyword id="KW-0997">Cell inner membrane</keyword>
<keyword id="KW-1003">Cell membrane</keyword>
<keyword id="KW-0139">CF(1)</keyword>
<keyword id="KW-0375">Hydrogen ion transport</keyword>
<keyword id="KW-0406">Ion transport</keyword>
<keyword id="KW-0472">Membrane</keyword>
<keyword id="KW-0547">Nucleotide-binding</keyword>
<keyword id="KW-1278">Translocase</keyword>
<keyword id="KW-0813">Transport</keyword>
<comment type="function">
    <text evidence="1">Produces ATP from ADP in the presence of a proton gradient across the membrane. The catalytic sites are hosted primarily by the beta subunits.</text>
</comment>
<comment type="catalytic activity">
    <reaction evidence="1">
        <text>ATP + H2O + 4 H(+)(in) = ADP + phosphate + 5 H(+)(out)</text>
        <dbReference type="Rhea" id="RHEA:57720"/>
        <dbReference type="ChEBI" id="CHEBI:15377"/>
        <dbReference type="ChEBI" id="CHEBI:15378"/>
        <dbReference type="ChEBI" id="CHEBI:30616"/>
        <dbReference type="ChEBI" id="CHEBI:43474"/>
        <dbReference type="ChEBI" id="CHEBI:456216"/>
        <dbReference type="EC" id="7.1.2.2"/>
    </reaction>
</comment>
<comment type="subunit">
    <text evidence="1">F-type ATPases have 2 components, CF(1) - the catalytic core - and CF(0) - the membrane proton channel. CF(1) has five subunits: alpha(3), beta(3), gamma(1), delta(1), epsilon(1). CF(0) has three main subunits: a(1), b(2) and c(9-12). The alpha and beta chains form an alternating ring which encloses part of the gamma chain. CF(1) is attached to CF(0) by a central stalk formed by the gamma and epsilon chains, while a peripheral stalk is formed by the delta and b chains.</text>
</comment>
<comment type="subcellular location">
    <subcellularLocation>
        <location evidence="1">Cell inner membrane</location>
        <topology evidence="1">Peripheral membrane protein</topology>
    </subcellularLocation>
</comment>
<comment type="similarity">
    <text evidence="1">Belongs to the ATPase alpha/beta chains family.</text>
</comment>
<comment type="sequence caution" evidence="2">
    <conflict type="erroneous initiation">
        <sequence resource="EMBL-CDS" id="AAL03773"/>
    </conflict>
</comment>
<evidence type="ECO:0000255" key="1">
    <source>
        <dbReference type="HAMAP-Rule" id="MF_01347"/>
    </source>
</evidence>
<evidence type="ECO:0000305" key="2"/>
<sequence length="473" mass="51108">MTKNIGKITQIISAVVDVKFTNNGELPKILNALECYNDKQRIVLEVAQHIGDDTVRCIAMDSMEGLVRGVEVIDTGSPIRIPVGTETLGRIMNVVGEPIDGKGDIKSSNISSIYKPAPDFTHQSTECNILVTGIKVIDLLAPYTKGGKIGLFGGAGVGKTVLIMELINNVAKAHGGYTVFAGVGERTREGNDLYHEMIDSGVINLAEPEKSKVALVYGQMNEPPGARARVALSGLTIAESFRDMNEGQDVLFFVDNIFRFTQAGSEVSALLGRIPSAVGYQPTLATDMGELQERITSTKYGSITSVQAIYVPADDLTDPAPATSFAHLDATTVLSRQIAEFGIYPAVDPLDSNSQVLDPMIVGEEHYSVARQVQQVLQTYKSLQDIITILGMDELSEEDKLTVARARKIQRFLSQPFHVAEVFTGAAGKFVNLADTIAGFKGLVEGKYDDLPEAAFYMVGTIDEAIEKAQTLK</sequence>
<accession>Q92G88</accession>
<protein>
    <recommendedName>
        <fullName evidence="1">ATP synthase subunit beta</fullName>
        <ecNumber evidence="1">7.1.2.2</ecNumber>
    </recommendedName>
    <alternativeName>
        <fullName evidence="1">ATP synthase F1 sector subunit beta</fullName>
    </alternativeName>
    <alternativeName>
        <fullName evidence="1">F-ATPase subunit beta</fullName>
    </alternativeName>
</protein>